<gene>
    <name evidence="1" type="primary">rps11</name>
    <name type="ordered locus">Memar_1802</name>
</gene>
<feature type="chain" id="PRO_0000294897" description="Small ribosomal subunit protein uS11">
    <location>
        <begin position="1"/>
        <end position="129"/>
    </location>
</feature>
<feature type="region of interest" description="Disordered" evidence="2">
    <location>
        <begin position="107"/>
        <end position="129"/>
    </location>
</feature>
<reference key="1">
    <citation type="journal article" date="2009" name="Stand. Genomic Sci.">
        <title>Complete genome sequence of Methanoculleus marisnigri Romesser et al. 1981 type strain JR1.</title>
        <authorList>
            <person name="Anderson I.J."/>
            <person name="Sieprawska-Lupa M."/>
            <person name="Lapidus A."/>
            <person name="Nolan M."/>
            <person name="Copeland A."/>
            <person name="Glavina Del Rio T."/>
            <person name="Tice H."/>
            <person name="Dalin E."/>
            <person name="Barry K."/>
            <person name="Saunders E."/>
            <person name="Han C."/>
            <person name="Brettin T."/>
            <person name="Detter J.C."/>
            <person name="Bruce D."/>
            <person name="Mikhailova N."/>
            <person name="Pitluck S."/>
            <person name="Hauser L."/>
            <person name="Land M."/>
            <person name="Lucas S."/>
            <person name="Richardson P."/>
            <person name="Whitman W.B."/>
            <person name="Kyrpides N.C."/>
        </authorList>
    </citation>
    <scope>NUCLEOTIDE SEQUENCE [LARGE SCALE GENOMIC DNA]</scope>
    <source>
        <strain>ATCC 35101 / DSM 1498 / JR1</strain>
    </source>
</reference>
<evidence type="ECO:0000255" key="1">
    <source>
        <dbReference type="HAMAP-Rule" id="MF_01310"/>
    </source>
</evidence>
<evidence type="ECO:0000256" key="2">
    <source>
        <dbReference type="SAM" id="MobiDB-lite"/>
    </source>
</evidence>
<evidence type="ECO:0000305" key="3"/>
<sequence length="129" mass="13745">MAEEKWGIAHIFASFNNTIITVTDLSGAETVTKSSGGMVVKQDRNESSPYAAMQMAIQVAQNARDKGITGVHVKVRAPGRGKQRSPGPGAQAAIRALARAGMRIGRIEDVTPVPHDSIRGKGGRRGRRV</sequence>
<name>RS11_METMJ</name>
<dbReference type="EMBL" id="CP000562">
    <property type="protein sequence ID" value="ABN57728.1"/>
    <property type="molecule type" value="Genomic_DNA"/>
</dbReference>
<dbReference type="RefSeq" id="WP_011844637.1">
    <property type="nucleotide sequence ID" value="NC_009051.1"/>
</dbReference>
<dbReference type="SMR" id="A3CWH8"/>
<dbReference type="STRING" id="368407.Memar_1802"/>
<dbReference type="GeneID" id="4847152"/>
<dbReference type="KEGG" id="mem:Memar_1802"/>
<dbReference type="eggNOG" id="arCOG04240">
    <property type="taxonomic scope" value="Archaea"/>
</dbReference>
<dbReference type="HOGENOM" id="CLU_072439_6_1_2"/>
<dbReference type="OrthoDB" id="12054at2157"/>
<dbReference type="Proteomes" id="UP000002146">
    <property type="component" value="Chromosome"/>
</dbReference>
<dbReference type="GO" id="GO:1990904">
    <property type="term" value="C:ribonucleoprotein complex"/>
    <property type="evidence" value="ECO:0007669"/>
    <property type="project" value="UniProtKB-KW"/>
</dbReference>
<dbReference type="GO" id="GO:0005840">
    <property type="term" value="C:ribosome"/>
    <property type="evidence" value="ECO:0007669"/>
    <property type="project" value="UniProtKB-KW"/>
</dbReference>
<dbReference type="GO" id="GO:0019843">
    <property type="term" value="F:rRNA binding"/>
    <property type="evidence" value="ECO:0007669"/>
    <property type="project" value="UniProtKB-UniRule"/>
</dbReference>
<dbReference type="GO" id="GO:0003735">
    <property type="term" value="F:structural constituent of ribosome"/>
    <property type="evidence" value="ECO:0007669"/>
    <property type="project" value="InterPro"/>
</dbReference>
<dbReference type="GO" id="GO:0006412">
    <property type="term" value="P:translation"/>
    <property type="evidence" value="ECO:0007669"/>
    <property type="project" value="UniProtKB-UniRule"/>
</dbReference>
<dbReference type="FunFam" id="3.30.420.80:FF:000007">
    <property type="entry name" value="30S ribosomal protein S11"/>
    <property type="match status" value="1"/>
</dbReference>
<dbReference type="Gene3D" id="3.30.420.80">
    <property type="entry name" value="Ribosomal protein S11"/>
    <property type="match status" value="1"/>
</dbReference>
<dbReference type="HAMAP" id="MF_01310">
    <property type="entry name" value="Ribosomal_uS11"/>
    <property type="match status" value="1"/>
</dbReference>
<dbReference type="InterPro" id="IPR001971">
    <property type="entry name" value="Ribosomal_uS11"/>
</dbReference>
<dbReference type="InterPro" id="IPR019961">
    <property type="entry name" value="Ribosomal_uS11_archaeal"/>
</dbReference>
<dbReference type="InterPro" id="IPR018102">
    <property type="entry name" value="Ribosomal_uS11_CS"/>
</dbReference>
<dbReference type="InterPro" id="IPR036967">
    <property type="entry name" value="Ribosomal_uS11_sf"/>
</dbReference>
<dbReference type="NCBIfam" id="TIGR03628">
    <property type="entry name" value="arch_S11P"/>
    <property type="match status" value="1"/>
</dbReference>
<dbReference type="NCBIfam" id="NF007176">
    <property type="entry name" value="PRK09607.1"/>
    <property type="match status" value="1"/>
</dbReference>
<dbReference type="PANTHER" id="PTHR11759">
    <property type="entry name" value="40S RIBOSOMAL PROTEIN S14/30S RIBOSOMAL PROTEIN S11"/>
    <property type="match status" value="1"/>
</dbReference>
<dbReference type="Pfam" id="PF00411">
    <property type="entry name" value="Ribosomal_S11"/>
    <property type="match status" value="1"/>
</dbReference>
<dbReference type="PIRSF" id="PIRSF002131">
    <property type="entry name" value="Ribosomal_S11"/>
    <property type="match status" value="1"/>
</dbReference>
<dbReference type="SUPFAM" id="SSF53137">
    <property type="entry name" value="Translational machinery components"/>
    <property type="match status" value="1"/>
</dbReference>
<dbReference type="PROSITE" id="PS00054">
    <property type="entry name" value="RIBOSOMAL_S11"/>
    <property type="match status" value="1"/>
</dbReference>
<proteinExistence type="inferred from homology"/>
<protein>
    <recommendedName>
        <fullName evidence="1">Small ribosomal subunit protein uS11</fullName>
    </recommendedName>
    <alternativeName>
        <fullName evidence="3">30S ribosomal protein S11</fullName>
    </alternativeName>
</protein>
<comment type="function">
    <text evidence="1">Located on the platform of the 30S subunit.</text>
</comment>
<comment type="subunit">
    <text evidence="1">Part of the 30S ribosomal subunit.</text>
</comment>
<comment type="similarity">
    <text evidence="1">Belongs to the universal ribosomal protein uS11 family.</text>
</comment>
<organism>
    <name type="scientific">Methanoculleus marisnigri (strain ATCC 35101 / DSM 1498 / JR1)</name>
    <dbReference type="NCBI Taxonomy" id="368407"/>
    <lineage>
        <taxon>Archaea</taxon>
        <taxon>Methanobacteriati</taxon>
        <taxon>Methanobacteriota</taxon>
        <taxon>Stenosarchaea group</taxon>
        <taxon>Methanomicrobia</taxon>
        <taxon>Methanomicrobiales</taxon>
        <taxon>Methanomicrobiaceae</taxon>
        <taxon>Methanoculleus</taxon>
    </lineage>
</organism>
<keyword id="KW-0687">Ribonucleoprotein</keyword>
<keyword id="KW-0689">Ribosomal protein</keyword>
<keyword id="KW-0694">RNA-binding</keyword>
<keyword id="KW-0699">rRNA-binding</keyword>
<accession>A3CWH8</accession>